<organism>
    <name type="scientific">Phaeosphaeria nodorum (strain SN15 / ATCC MYA-4574 / FGSC 10173)</name>
    <name type="common">Glume blotch fungus</name>
    <name type="synonym">Parastagonospora nodorum</name>
    <dbReference type="NCBI Taxonomy" id="321614"/>
    <lineage>
        <taxon>Eukaryota</taxon>
        <taxon>Fungi</taxon>
        <taxon>Dikarya</taxon>
        <taxon>Ascomycota</taxon>
        <taxon>Pezizomycotina</taxon>
        <taxon>Dothideomycetes</taxon>
        <taxon>Pleosporomycetidae</taxon>
        <taxon>Pleosporales</taxon>
        <taxon>Pleosporineae</taxon>
        <taxon>Phaeosphaeriaceae</taxon>
        <taxon>Parastagonospora</taxon>
    </lineage>
</organism>
<protein>
    <recommendedName>
        <fullName>Long chronological lifespan protein 2</fullName>
    </recommendedName>
</protein>
<comment type="function">
    <text evidence="1">Probable component of the endoplasmic reticulum-associated degradation (ERAD) pathway.</text>
</comment>
<comment type="similarity">
    <text evidence="3">Belongs to the LCL2 family.</text>
</comment>
<gene>
    <name type="primary">LCL2</name>
    <name type="ORF">SNOG_11258</name>
</gene>
<proteinExistence type="inferred from homology"/>
<sequence>MARFTSIVLVLSACFVSSRAQFGFFDQMFGNQGHQQHQEPQNVRSDSSWYQAQYEGAQCTHYLCPGTLSCVHFPHHCPCAWESVEDKAELGDGIAICGSKGGWKEGEFAKKVELARKGVL</sequence>
<name>LCL2_PHANO</name>
<reference key="1">
    <citation type="journal article" date="2007" name="Plant Cell">
        <title>Dothideomycete-plant interactions illuminated by genome sequencing and EST analysis of the wheat pathogen Stagonospora nodorum.</title>
        <authorList>
            <person name="Hane J.K."/>
            <person name="Lowe R.G.T."/>
            <person name="Solomon P.S."/>
            <person name="Tan K.-C."/>
            <person name="Schoch C.L."/>
            <person name="Spatafora J.W."/>
            <person name="Crous P.W."/>
            <person name="Kodira C.D."/>
            <person name="Birren B.W."/>
            <person name="Galagan J.E."/>
            <person name="Torriani S.F.F."/>
            <person name="McDonald B.A."/>
            <person name="Oliver R.P."/>
        </authorList>
    </citation>
    <scope>NUCLEOTIDE SEQUENCE [LARGE SCALE GENOMIC DNA]</scope>
    <source>
        <strain>SN15 / ATCC MYA-4574 / FGSC 10173</strain>
    </source>
</reference>
<keyword id="KW-0732">Signal</keyword>
<accession>Q0UAF6</accession>
<evidence type="ECO:0000250" key="1"/>
<evidence type="ECO:0000255" key="2"/>
<evidence type="ECO:0000305" key="3"/>
<dbReference type="EMBL" id="CH445342">
    <property type="protein sequence ID" value="EAT81757.1"/>
    <property type="molecule type" value="Genomic_DNA"/>
</dbReference>
<dbReference type="RefSeq" id="XP_001801500.1">
    <property type="nucleotide sequence ID" value="XM_001801448.1"/>
</dbReference>
<dbReference type="SMR" id="Q0UAF6"/>
<dbReference type="FunCoup" id="Q0UAF6">
    <property type="interactions" value="6"/>
</dbReference>
<dbReference type="STRING" id="321614.Q0UAF6"/>
<dbReference type="EnsemblFungi" id="SNOT_11258">
    <property type="protein sequence ID" value="SNOT_11258"/>
    <property type="gene ID" value="SNOG_11258"/>
</dbReference>
<dbReference type="GeneID" id="5978408"/>
<dbReference type="KEGG" id="pno:SNOG_11258"/>
<dbReference type="VEuPathDB" id="FungiDB:JI435_112580"/>
<dbReference type="eggNOG" id="ENOG502S416">
    <property type="taxonomic scope" value="Eukaryota"/>
</dbReference>
<dbReference type="HOGENOM" id="CLU_142363_0_0_1"/>
<dbReference type="InParanoid" id="Q0UAF6"/>
<dbReference type="OMA" id="DNYLCPD"/>
<dbReference type="OrthoDB" id="2234316at2759"/>
<dbReference type="Proteomes" id="UP000001055">
    <property type="component" value="Unassembled WGS sequence"/>
</dbReference>
<dbReference type="CDD" id="cd23996">
    <property type="entry name" value="LCL2-like"/>
    <property type="match status" value="1"/>
</dbReference>
<dbReference type="InterPro" id="IPR034543">
    <property type="entry name" value="LCL2"/>
</dbReference>
<dbReference type="PANTHER" id="PTHR38425">
    <property type="entry name" value="LONG CHRONOLOGICAL LIFESPAN PROTEIN 2"/>
    <property type="match status" value="1"/>
</dbReference>
<dbReference type="PANTHER" id="PTHR38425:SF1">
    <property type="entry name" value="LONG CHRONOLOGICAL LIFESPAN PROTEIN 2"/>
    <property type="match status" value="1"/>
</dbReference>
<feature type="signal peptide" evidence="2">
    <location>
        <begin position="1"/>
        <end position="20"/>
    </location>
</feature>
<feature type="chain" id="PRO_0000408620" description="Long chronological lifespan protein 2">
    <location>
        <begin position="21"/>
        <end position="120"/>
    </location>
</feature>